<comment type="function">
    <text>May play an important role in fibrillogenesis by controlling lateral growth of collagen II fibrils.</text>
</comment>
<comment type="subunit">
    <text>Trimers composed of three different chains: alpha 1(XI), alpha 2(XI), and alpha 3(XI). Alpha 3(XI) is a post-translational modification of alpha 1(II). Alpha 1(V) can also be found instead of alpha 3(XI)=1(II).</text>
</comment>
<comment type="subcellular location">
    <subcellularLocation>
        <location evidence="3">Secreted</location>
        <location evidence="3">Extracellular space</location>
        <location evidence="3">Extracellular matrix</location>
    </subcellularLocation>
</comment>
<comment type="alternative products">
    <event type="alternative splicing"/>
    <isoform>
        <id>P12107-1</id>
        <name>A</name>
        <sequence type="displayed"/>
    </isoform>
    <isoform>
        <id>P12107-2</id>
        <name>B</name>
        <sequence type="described" ref="VSP_001145"/>
    </isoform>
    <isoform>
        <id>P12107-3</id>
        <name>C</name>
        <sequence type="described" ref="VSP_001146"/>
    </isoform>
    <isoform>
        <id>P12107-4</id>
        <name>4</name>
        <sequence type="described" ref="VSP_046318"/>
    </isoform>
    <text>Additional isoforms seem to exist. There is alternative usage of exon IIA or exon IIB. Transcripts containing exon IIA or IIB are present in cartilage, but exon IIB is preferentially utilized in transcripts from tendon.</text>
</comment>
<comment type="tissue specificity">
    <text>Cartilage, placenta and some tumor or virally transformed cell lines. Isoforms using exon IIA or IIB are found in the cartilage while isoforms using only exon IIB are found in the tendon.</text>
</comment>
<comment type="domain">
    <text evidence="1">The C-terminal propeptide, also known as COLFI domain, have crucial roles in tissue growth and repair by controlling both the intracellular assembly of procollagen molecules and the extracellular assembly of collagen fibrils. It binds a calcium ion which is essential for its function (By similarity).</text>
</comment>
<comment type="PTM">
    <text>Prolines at the third position of the tripeptide repeating unit (G-X-Y) are hydroxylated in some or all of the chains.</text>
</comment>
<comment type="PTM">
    <text evidence="1">N-glycosylated.</text>
</comment>
<comment type="disease" evidence="5 9 12">
    <disease id="DI-01092">
        <name>Stickler syndrome 2</name>
        <acronym>STL2</acronym>
        <description>An autosomal dominant form of Stickler syndrome, an inherited disorder that associates ocular signs with more or less complete forms of Pierre Robin sequence, bone disorders and sensorineural deafness. Ocular disorders may include juvenile cataract, myopia, strabismus, vitreoretinal or chorioretinal degeneration, retinal detachment, and chronic uveitis. Pierre Robin sequence includes an opening in the roof of the mouth (a cleft palate), a large tongue (macroglossia), and a small lower jaw (micrognathia). Bones are affected by slight platyspondylisis and large, often defective epiphyses. Juvenile joint laxity is followed by early signs of arthrosis. The degree of hearing loss varies among affected individuals and may become more severe over time. Syndrome expressivity is variable.</description>
        <dbReference type="MIM" id="604841"/>
    </disease>
    <text>The disease is caused by variants affecting the gene represented in this entry.</text>
</comment>
<comment type="disease" evidence="5">
    <disease id="DI-01939">
        <name>Marshall syndrome</name>
        <acronym>MRSHS</acronym>
        <description>An autosomal dominant disorder characterized by ocular abnormalities, deafness, craniofacial anomalies, and anhidrotic ectodermal dysplasia. Clinical features include short stature; flat or retruded midface with short, depressed nose, flat nasal bridge and anteverted nares; cleft palate with or without the Pierre Robin sequence; appearance of large eyes with ocular hypertelorism; cataracts, either congenital or juvenile; esotropia; high myopia; sensorineural hearing loss; spondyloepiphyseal abnormalities; calcification of the falx cerebri; ectodermal abnormalities, including defects in sweating and dental structures.</description>
        <dbReference type="MIM" id="154780"/>
    </disease>
    <text>The disease is caused by variants affecting the gene represented in this entry.</text>
</comment>
<comment type="disease" evidence="10">
    <disease id="DI-03132">
        <name>Fibrochondrogenesis 1</name>
        <acronym>FBCG1</acronym>
        <description>A severe short-limbed skeletal dysplasia characterized by broad long-bone metaphyses, pear-shaped vertebral bodies, and characteristic morphology of the growth plate, in which the chondrocytes have a fibroblastic appearance and there are regions of fibrous cartilage extracellular matrix. Clinical features include a flat midface with a small nose and anteverted nares, significant shortening of all limb segments but relatively normal hands and feet, and a small bell-shaped thorax with a protuberant abdomen.</description>
        <dbReference type="MIM" id="228520"/>
    </disease>
    <text>The disease is caused by variants affecting the gene represented in this entry.</text>
</comment>
<comment type="disease" evidence="11">
    <disease id="DI-05635">
        <name>Deafness, autosomal dominant, 37</name>
        <acronym>DFNA37</acronym>
        <description>A form of non-syndromic sensorineural hearing loss. Sensorineural deafness results from damage to the neural receptors of the inner ear, the nerve pathways to the brain, or the area of the brain that receives sound information. DFNA37 is a slowly progressive, postlingual form.</description>
        <dbReference type="MIM" id="618533"/>
    </disease>
    <text>The disease may be caused by variants affecting the gene represented in this entry.</text>
</comment>
<comment type="similarity">
    <text evidence="3">Belongs to the fibrillar collagen family.</text>
</comment>
<reference key="1">
    <citation type="journal article" date="1990" name="J. Biol. Chem.">
        <title>Pro-alpha 1(XI) collagen. Structure of the amino-terminal propeptide and expression of the gene in tumor cell lines.</title>
        <authorList>
            <person name="Yoshioka H."/>
            <person name="Ramirez F."/>
        </authorList>
    </citation>
    <scope>NUCLEOTIDE SEQUENCE [MRNA] (ISOFORM A)</scope>
    <scope>VARIANTS LEU-1323 AND PRO-1535</scope>
</reference>
<reference key="2">
    <citation type="journal article" date="1999" name="Am. J. Hum. Genet.">
        <title>Splicing mutations of 54-bp exons in the COL11A1 gene cause Marshall syndrome, but other mutations cause overlapping Marshall/Stickler phenotypes.</title>
        <authorList>
            <person name="Annunen S."/>
            <person name="Koerkkoe J."/>
            <person name="Czarny M."/>
            <person name="Warman M.L."/>
            <person name="Brunner H.G."/>
            <person name="Kaeaeriaeinen H."/>
            <person name="Mulliken J.B."/>
            <person name="Tranebjaerg L."/>
            <person name="Brooks D.G."/>
            <person name="Cox G.F."/>
            <person name="Cruysberg J.R."/>
            <person name="Curtis M.A."/>
            <person name="Davenport S.L.H."/>
            <person name="Friedrich C.A."/>
            <person name="Kaitila I."/>
            <person name="Krawczynski M.R."/>
            <person name="Latos-Bielenska A."/>
            <person name="Mukai S."/>
            <person name="Olsen B.R."/>
            <person name="Shinno N."/>
            <person name="Somer M."/>
            <person name="Vikkula M."/>
            <person name="Zlotogora J."/>
            <person name="Prockop D.J."/>
            <person name="Ala-Kokko L."/>
        </authorList>
    </citation>
    <scope>NUCLEOTIDE SEQUENCE [GENOMIC DNA]</scope>
    <scope>ALTERNATIVE SPLICING (ISOFORMS A; B AND C)</scope>
    <scope>VARIANTS STL2/MARSHALL SYNDROME ARG-676; 921-GLN--PRO-926 DEL; 1313-PHE--GLY-1315 DEL; LEU-1323; VAL-1516 AND PRO-1535</scope>
</reference>
<reference key="3">
    <citation type="journal article" date="2006" name="Nature">
        <title>The DNA sequence and biological annotation of human chromosome 1.</title>
        <authorList>
            <person name="Gregory S.G."/>
            <person name="Barlow K.F."/>
            <person name="McLay K.E."/>
            <person name="Kaul R."/>
            <person name="Swarbreck D."/>
            <person name="Dunham A."/>
            <person name="Scott C.E."/>
            <person name="Howe K.L."/>
            <person name="Woodfine K."/>
            <person name="Spencer C.C.A."/>
            <person name="Jones M.C."/>
            <person name="Gillson C."/>
            <person name="Searle S."/>
            <person name="Zhou Y."/>
            <person name="Kokocinski F."/>
            <person name="McDonald L."/>
            <person name="Evans R."/>
            <person name="Phillips K."/>
            <person name="Atkinson A."/>
            <person name="Cooper R."/>
            <person name="Jones C."/>
            <person name="Hall R.E."/>
            <person name="Andrews T.D."/>
            <person name="Lloyd C."/>
            <person name="Ainscough R."/>
            <person name="Almeida J.P."/>
            <person name="Ambrose K.D."/>
            <person name="Anderson F."/>
            <person name="Andrew R.W."/>
            <person name="Ashwell R.I.S."/>
            <person name="Aubin K."/>
            <person name="Babbage A.K."/>
            <person name="Bagguley C.L."/>
            <person name="Bailey J."/>
            <person name="Beasley H."/>
            <person name="Bethel G."/>
            <person name="Bird C.P."/>
            <person name="Bray-Allen S."/>
            <person name="Brown J.Y."/>
            <person name="Brown A.J."/>
            <person name="Buckley D."/>
            <person name="Burton J."/>
            <person name="Bye J."/>
            <person name="Carder C."/>
            <person name="Chapman J.C."/>
            <person name="Clark S.Y."/>
            <person name="Clarke G."/>
            <person name="Clee C."/>
            <person name="Cobley V."/>
            <person name="Collier R.E."/>
            <person name="Corby N."/>
            <person name="Coville G.J."/>
            <person name="Davies J."/>
            <person name="Deadman R."/>
            <person name="Dunn M."/>
            <person name="Earthrowl M."/>
            <person name="Ellington A.G."/>
            <person name="Errington H."/>
            <person name="Frankish A."/>
            <person name="Frankland J."/>
            <person name="French L."/>
            <person name="Garner P."/>
            <person name="Garnett J."/>
            <person name="Gay L."/>
            <person name="Ghori M.R.J."/>
            <person name="Gibson R."/>
            <person name="Gilby L.M."/>
            <person name="Gillett W."/>
            <person name="Glithero R.J."/>
            <person name="Grafham D.V."/>
            <person name="Griffiths C."/>
            <person name="Griffiths-Jones S."/>
            <person name="Grocock R."/>
            <person name="Hammond S."/>
            <person name="Harrison E.S.I."/>
            <person name="Hart E."/>
            <person name="Haugen E."/>
            <person name="Heath P.D."/>
            <person name="Holmes S."/>
            <person name="Holt K."/>
            <person name="Howden P.J."/>
            <person name="Hunt A.R."/>
            <person name="Hunt S.E."/>
            <person name="Hunter G."/>
            <person name="Isherwood J."/>
            <person name="James R."/>
            <person name="Johnson C."/>
            <person name="Johnson D."/>
            <person name="Joy A."/>
            <person name="Kay M."/>
            <person name="Kershaw J.K."/>
            <person name="Kibukawa M."/>
            <person name="Kimberley A.M."/>
            <person name="King A."/>
            <person name="Knights A.J."/>
            <person name="Lad H."/>
            <person name="Laird G."/>
            <person name="Lawlor S."/>
            <person name="Leongamornlert D.A."/>
            <person name="Lloyd D.M."/>
            <person name="Loveland J."/>
            <person name="Lovell J."/>
            <person name="Lush M.J."/>
            <person name="Lyne R."/>
            <person name="Martin S."/>
            <person name="Mashreghi-Mohammadi M."/>
            <person name="Matthews L."/>
            <person name="Matthews N.S.W."/>
            <person name="McLaren S."/>
            <person name="Milne S."/>
            <person name="Mistry S."/>
            <person name="Moore M.J.F."/>
            <person name="Nickerson T."/>
            <person name="O'Dell C.N."/>
            <person name="Oliver K."/>
            <person name="Palmeiri A."/>
            <person name="Palmer S.A."/>
            <person name="Parker A."/>
            <person name="Patel D."/>
            <person name="Pearce A.V."/>
            <person name="Peck A.I."/>
            <person name="Pelan S."/>
            <person name="Phelps K."/>
            <person name="Phillimore B.J."/>
            <person name="Plumb R."/>
            <person name="Rajan J."/>
            <person name="Raymond C."/>
            <person name="Rouse G."/>
            <person name="Saenphimmachak C."/>
            <person name="Sehra H.K."/>
            <person name="Sheridan E."/>
            <person name="Shownkeen R."/>
            <person name="Sims S."/>
            <person name="Skuce C.D."/>
            <person name="Smith M."/>
            <person name="Steward C."/>
            <person name="Subramanian S."/>
            <person name="Sycamore N."/>
            <person name="Tracey A."/>
            <person name="Tromans A."/>
            <person name="Van Helmond Z."/>
            <person name="Wall M."/>
            <person name="Wallis J.M."/>
            <person name="White S."/>
            <person name="Whitehead S.L."/>
            <person name="Wilkinson J.E."/>
            <person name="Willey D.L."/>
            <person name="Williams H."/>
            <person name="Wilming L."/>
            <person name="Wray P.W."/>
            <person name="Wu Z."/>
            <person name="Coulson A."/>
            <person name="Vaudin M."/>
            <person name="Sulston J.E."/>
            <person name="Durbin R.M."/>
            <person name="Hubbard T."/>
            <person name="Wooster R."/>
            <person name="Dunham I."/>
            <person name="Carter N.P."/>
            <person name="McVean G."/>
            <person name="Ross M.T."/>
            <person name="Harrow J."/>
            <person name="Olson M.V."/>
            <person name="Beck S."/>
            <person name="Rogers J."/>
            <person name="Bentley D.R."/>
        </authorList>
    </citation>
    <scope>NUCLEOTIDE SEQUENCE [LARGE SCALE GENOMIC DNA]</scope>
</reference>
<reference key="4">
    <citation type="submission" date="2005-09" db="EMBL/GenBank/DDBJ databases">
        <authorList>
            <person name="Mural R.J."/>
            <person name="Istrail S."/>
            <person name="Sutton G.G."/>
            <person name="Florea L."/>
            <person name="Halpern A.L."/>
            <person name="Mobarry C.M."/>
            <person name="Lippert R."/>
            <person name="Walenz B."/>
            <person name="Shatkay H."/>
            <person name="Dew I."/>
            <person name="Miller J.R."/>
            <person name="Flanigan M.J."/>
            <person name="Edwards N.J."/>
            <person name="Bolanos R."/>
            <person name="Fasulo D."/>
            <person name="Halldorsson B.V."/>
            <person name="Hannenhalli S."/>
            <person name="Turner R."/>
            <person name="Yooseph S."/>
            <person name="Lu F."/>
            <person name="Nusskern D.R."/>
            <person name="Shue B.C."/>
            <person name="Zheng X.H."/>
            <person name="Zhong F."/>
            <person name="Delcher A.L."/>
            <person name="Huson D.H."/>
            <person name="Kravitz S.A."/>
            <person name="Mouchard L."/>
            <person name="Reinert K."/>
            <person name="Remington K.A."/>
            <person name="Clark A.G."/>
            <person name="Waterman M.S."/>
            <person name="Eichler E.E."/>
            <person name="Adams M.D."/>
            <person name="Hunkapiller M.W."/>
            <person name="Myers E.W."/>
            <person name="Venter J.C."/>
        </authorList>
    </citation>
    <scope>NUCLEOTIDE SEQUENCE [LARGE SCALE GENOMIC DNA]</scope>
    <scope>VARIANT PRO-1535</scope>
</reference>
<reference key="5">
    <citation type="journal article" date="2004" name="Genome Res.">
        <title>The status, quality, and expansion of the NIH full-length cDNA project: the Mammalian Gene Collection (MGC).</title>
        <authorList>
            <consortium name="The MGC Project Team"/>
        </authorList>
    </citation>
    <scope>NUCLEOTIDE SEQUENCE [LARGE SCALE MRNA] (ISOFORM 4)</scope>
    <scope>VARIANTS LEU-1323 AND PRO-1535</scope>
</reference>
<reference key="6">
    <citation type="journal article" date="1988" name="J. Biol. Chem.">
        <title>Cloning and sequencing of pro-alpha 1 (XI) collagen cDNA demonstrates that type XI belongs to the fibrillar class of collagens and reveals that the expression of the gene is not restricted to cartilagenous tissue.</title>
        <authorList>
            <person name="Bernard M."/>
            <person name="Yoshioka H."/>
            <person name="Rodriguez E."/>
            <person name="van der Rest M."/>
            <person name="Kimura T."/>
            <person name="Ninomiya Y."/>
            <person name="Olsen B.R."/>
            <person name="Ramirez F."/>
        </authorList>
    </citation>
    <scope>NUCLEOTIDE SEQUENCE [MRNA] OF 538-1806</scope>
    <scope>PARTIAL PROTEIN SEQUENCE</scope>
    <scope>ALLYSINE AT LYS-612 AND LYS-1452</scope>
</reference>
<reference key="7">
    <citation type="journal article" date="1995" name="J. Biol. Chem.">
        <title>Alternative mRNA processing occurs in the variable region of the pro-alpha 1(XI) and pro-alpha 2(XI) collagen chains.</title>
        <authorList>
            <person name="Zhidkova N.I."/>
            <person name="Justice S.K."/>
            <person name="Mayne R."/>
        </authorList>
    </citation>
    <scope>ALTERNATIVE SPLICING</scope>
    <source>
        <tissue>Blood</tissue>
    </source>
</reference>
<reference key="8">
    <citation type="journal article" date="2019" name="Genet. Med.">
        <title>Splice-altering variant in COL11A1 as a cause of nonsyndromic hearing loss DFNA37.</title>
        <authorList>
            <person name="Booth K.T."/>
            <person name="Askew J.W."/>
            <person name="Talebizadeh Z."/>
            <person name="Huygen P.L.M."/>
            <person name="Eudy J."/>
            <person name="Kenyon J."/>
            <person name="Hoover D."/>
            <person name="Hildebrand M.S."/>
            <person name="Smith K.R."/>
            <person name="Bahlo M."/>
            <person name="Kimberling W.J."/>
            <person name="Smith R.J.H."/>
            <person name="Azaiez H."/>
            <person name="Smith S.D."/>
        </authorList>
    </citation>
    <scope>INVOLVEMENT IN DFNA37</scope>
</reference>
<reference key="9">
    <citation type="journal article" date="1996" name="Hum. Mol. Genet.">
        <title>A family with Stickler syndrome type 2 has a mutation in the COL11A1 gene resulting in the substitution of glycine 97 by valine in alpha-1(XI) collagen.</title>
        <authorList>
            <person name="Richards A.J."/>
            <person name="Yates J.R.W."/>
            <person name="Williams R."/>
            <person name="Payne S.J."/>
            <person name="Pope F.M."/>
            <person name="Scott J.D."/>
            <person name="Snead M.P."/>
        </authorList>
    </citation>
    <scope>VARIANT STL2 VAL-625</scope>
</reference>
<reference key="10">
    <citation type="journal article" date="2006" name="Science">
        <title>The consensus coding sequences of human breast and colorectal cancers.</title>
        <authorList>
            <person name="Sjoeblom T."/>
            <person name="Jones S."/>
            <person name="Wood L.D."/>
            <person name="Parsons D.W."/>
            <person name="Lin J."/>
            <person name="Barber T.D."/>
            <person name="Mandelker D."/>
            <person name="Leary R.J."/>
            <person name="Ptak J."/>
            <person name="Silliman N."/>
            <person name="Szabo S."/>
            <person name="Buckhaults P."/>
            <person name="Farrell C."/>
            <person name="Meeh P."/>
            <person name="Markowitz S.D."/>
            <person name="Willis J."/>
            <person name="Dawson D."/>
            <person name="Willson J.K.V."/>
            <person name="Gazdar A.F."/>
            <person name="Hartigan J."/>
            <person name="Wu L."/>
            <person name="Liu C."/>
            <person name="Parmigiani G."/>
            <person name="Park B.H."/>
            <person name="Bachman K.E."/>
            <person name="Papadopoulos N."/>
            <person name="Vogelstein B."/>
            <person name="Kinzler K.W."/>
            <person name="Velculescu V.E."/>
        </authorList>
    </citation>
    <scope>VARIANTS [LARGE SCALE ANALYSIS] VAL-1326; LYS-1328 AND LEU-1328</scope>
</reference>
<reference key="11">
    <citation type="journal article" date="2010" name="Am. J. Hum. Genet.">
        <title>Fibrochondrogenesis results from mutations in the COL11A1 type XI collagen gene.</title>
        <authorList>
            <person name="Tompson S.W."/>
            <person name="Bacino C.A."/>
            <person name="Safina N.P."/>
            <person name="Bober M.B."/>
            <person name="Proud V.K."/>
            <person name="Funari T."/>
            <person name="Wangler M.F."/>
            <person name="Nevarez L."/>
            <person name="Ala-Kokko L."/>
            <person name="Wilcox W.R."/>
            <person name="Eyre D.R."/>
            <person name="Krakow D."/>
            <person name="Cohn D.H."/>
        </authorList>
    </citation>
    <scope>VARIANTS FBCG1 ARG-796 AND ARG-1042</scope>
</reference>
<reference key="12">
    <citation type="journal article" date="2010" name="Hum. Mutat.">
        <title>Stickler syndrome and the vitreous phenotype: mutations in COL2A1 and COL11A1.</title>
        <authorList>
            <person name="Richards A.J."/>
            <person name="McNinch A."/>
            <person name="Martin H."/>
            <person name="Oakhill K."/>
            <person name="Rai H."/>
            <person name="Waller S."/>
            <person name="Treacy B."/>
            <person name="Whittaker J."/>
            <person name="Meredith S."/>
            <person name="Poulson A."/>
            <person name="Snead M.P."/>
        </authorList>
    </citation>
    <scope>VARIANTS STL2 VAL-565; ARG-1027; 1110-VAL--PRO-1118 DEL; ASP-1513 AND VAL-1516</scope>
</reference>
<accession>P12107</accession>
<accession>B1ASK7</accession>
<accession>D3DT73</accession>
<accession>E9PCU0</accession>
<accession>Q14034</accession>
<accession>Q149N0</accession>
<accession>Q9UIT4</accession>
<accession>Q9UIT5</accession>
<accession>Q9UIT6</accession>
<name>COBA1_HUMAN</name>
<proteinExistence type="evidence at protein level"/>
<evidence type="ECO:0000250" key="1"/>
<evidence type="ECO:0000255" key="2"/>
<evidence type="ECO:0000255" key="3">
    <source>
        <dbReference type="PROSITE-ProRule" id="PRU00793"/>
    </source>
</evidence>
<evidence type="ECO:0000256" key="4">
    <source>
        <dbReference type="SAM" id="MobiDB-lite"/>
    </source>
</evidence>
<evidence type="ECO:0000269" key="5">
    <source>
    </source>
</evidence>
<evidence type="ECO:0000269" key="6">
    <source>
    </source>
</evidence>
<evidence type="ECO:0000269" key="7">
    <source>
    </source>
</evidence>
<evidence type="ECO:0000269" key="8">
    <source>
    </source>
</evidence>
<evidence type="ECO:0000269" key="9">
    <source>
    </source>
</evidence>
<evidence type="ECO:0000269" key="10">
    <source>
    </source>
</evidence>
<evidence type="ECO:0000269" key="11">
    <source>
    </source>
</evidence>
<evidence type="ECO:0000269" key="12">
    <source>
    </source>
</evidence>
<evidence type="ECO:0000269" key="13">
    <source ref="4"/>
</evidence>
<evidence type="ECO:0000303" key="14">
    <source>
    </source>
</evidence>
<evidence type="ECO:0000305" key="15"/>
<evidence type="ECO:0000305" key="16">
    <source>
    </source>
</evidence>
<organism>
    <name type="scientific">Homo sapiens</name>
    <name type="common">Human</name>
    <dbReference type="NCBI Taxonomy" id="9606"/>
    <lineage>
        <taxon>Eukaryota</taxon>
        <taxon>Metazoa</taxon>
        <taxon>Chordata</taxon>
        <taxon>Craniata</taxon>
        <taxon>Vertebrata</taxon>
        <taxon>Euteleostomi</taxon>
        <taxon>Mammalia</taxon>
        <taxon>Eutheria</taxon>
        <taxon>Euarchontoglires</taxon>
        <taxon>Primates</taxon>
        <taxon>Haplorrhini</taxon>
        <taxon>Catarrhini</taxon>
        <taxon>Hominidae</taxon>
        <taxon>Homo</taxon>
    </lineage>
</organism>
<sequence>MEPWSSRWKTKRWLWDFTVTTLALTFLFQAREVRGAAPVDVLKALDFHNSPEGISKTTGFCTNRKNSKGSDTAYRVSKQAQLSAPTKQLFPGGTFPEDFSILFTVKPKKGIQSFLLSIYNEHGIQQIGVEVGRSPVFLFEDHTGKPAPEDYPLFRTVNIADGKWHRVAISVEKKTVTMIVDCKKKTTKPLDRSERAIVDTNGITVFGTRILDEEVFEGDIQQFLITGDPKAAYDYCEHYSPDCDSSAPKAAQAQEPQIDEYAPEDIIEYDYEYGEAEYKEAESVTEGPTVTEETIAQTEANIVDDFQEYNYGTMESYQTEAPRHVSGTNEPNPVEEIFTEEYLTGEDYDSQRKNSEDTLYENKEIDGRDSDLLVDGDLGEYDFYEYKEYEDKPTSPPNEEFGPGVPAETDITETSINGHGAYGEKGQKGEPAVVEPGMLVEGPPGPAGPAGIMGPPGLQGPTGPPGDPGDRGPPGRPGLPGADGLPGPPGTMLMLPFRYGGDGSKGPTISAQEAQAQAILQQARIALRGPPGPMGLTGRPGPVGGPGSSGAKGESGDPGPQGPRGVQGPPGPTGKPGKRGRPGADGGRGMPGEPGAKGDRGFDGLPGLPGDKGHRGERGPQGPPGPPGDDGMRGEDGEIGPRGLPGEAGPRGLLGPRGTPGAPGQPGMAGVDGPPGPKGNMGPQGEPGPPGQQGNPGPQGLPGPQGPIGPPGEKGPQGKPGLAGLPGADGPPGHPGKEGQSGEKGALGPPGPQGPIGYPGPRGVKGADGVRGLKGSKGEKGEDGFPGFKGDMGLKGDRGEVGQIGPRGEDGPEGPKGRAGPTGDPGPSGQAGEKGKLGVPGLPGYPGRQGPKGSTGFPGFPGANGEKGARGVAGKPGPRGQRGPTGPRGSRGARGPTGKPGPKGTSGGDGPPGPPGERGPQGPQGPVGFPGPKGPPGPPGKDGLPGHPGQRGETGFQGKTGPPGPGGVVGPQGPTGETGPIGERGHPGPPGPPGEQGLPGAAGKEGAKGDPGPQGISGKDGPAGLRGFPGERGLPGAQGAPGLKGGEGPQGPPGPVGSPGERGSAGTAGPIGLPGRPGPQGPPGPAGEKGAPGEKGPQGPAGRDGVQGPVGLPGPAGPAGSPGEDGDKGEIGEPGQKGSKGDKGENGPPGPPGLQGPVGAPGIAGGDGEPGPRGQQGMFGQKGDEGARGFPGPPGPIGLQGLPGPPGEKGENGDVGPMGPPGPPGPRGPQGPNGADGPQGPPGSVGSVGGVGEKGEPGEAGNPGPPGEAGVGGPKGERGEKGEAGPPGAAGPPGAKGPPGDDGPKGNPGPVGFPGDPGPPGEPGPAGQDGVGGDKGEDGDPGQPGPPGPSGEAGPPGPPGKRGPPGAAGAEGRQGEKGAKGEAGAEGPPGKTGPVGPQGPAGKPGPEGLRGIPGPVGEQGLPGAAGQDGPPGPMGPPGLPGLKGDPGSKGEKGHPGLIGLIGPPGEQGEKGDRGLPGTQGSPGAKGDGGIPGPAGPLGPPGPPGLPGPQGPKGNKGSTGPAGQKGDSGLPGPPGSPGPPGEVIQPLPILSSKKTRRHTEGMQADADDNILDYSDGMEEIFGSLNSLKQDIEHMKFPMGTQTNPARTCKDLQLSHPDFPDGEYWIDPNQGCSGDSFKVYCNFTSGGETCIYPDKKSEGVRISSWPKEKPGSWFSEFKRGKLLSYLDVEGNSINMVQMTFLKLLTASARQNFTYHCHQSAAWYDVSSGSYDKALRFLGSNDEEMSYDNNPFIKTLYDGCASRKGYEKTVIEINTPKIDQVPIVDVMINDFGDQNQKFGFEVGPVCFLG</sequence>
<dbReference type="EMBL" id="J04177">
    <property type="protein sequence ID" value="AAA51891.1"/>
    <property type="molecule type" value="mRNA"/>
</dbReference>
<dbReference type="EMBL" id="AF101112">
    <property type="protein sequence ID" value="AAF04724.1"/>
    <property type="molecule type" value="Genomic_DNA"/>
</dbReference>
<dbReference type="EMBL" id="AF101079">
    <property type="protein sequence ID" value="AAF04724.1"/>
    <property type="status" value="JOINED"/>
    <property type="molecule type" value="Genomic_DNA"/>
</dbReference>
<dbReference type="EMBL" id="AF101080">
    <property type="protein sequence ID" value="AAF04724.1"/>
    <property type="status" value="JOINED"/>
    <property type="molecule type" value="Genomic_DNA"/>
</dbReference>
<dbReference type="EMBL" id="AF101081">
    <property type="protein sequence ID" value="AAF04724.1"/>
    <property type="status" value="JOINED"/>
    <property type="molecule type" value="Genomic_DNA"/>
</dbReference>
<dbReference type="EMBL" id="AF101082">
    <property type="protein sequence ID" value="AAF04724.1"/>
    <property type="status" value="JOINED"/>
    <property type="molecule type" value="Genomic_DNA"/>
</dbReference>
<dbReference type="EMBL" id="AF101083">
    <property type="protein sequence ID" value="AAF04724.1"/>
    <property type="status" value="JOINED"/>
    <property type="molecule type" value="Genomic_DNA"/>
</dbReference>
<dbReference type="EMBL" id="AF101084">
    <property type="protein sequence ID" value="AAF04724.1"/>
    <property type="status" value="JOINED"/>
    <property type="molecule type" value="Genomic_DNA"/>
</dbReference>
<dbReference type="EMBL" id="AF101085">
    <property type="protein sequence ID" value="AAF04724.1"/>
    <property type="status" value="JOINED"/>
    <property type="molecule type" value="Genomic_DNA"/>
</dbReference>
<dbReference type="EMBL" id="AF101086">
    <property type="protein sequence ID" value="AAF04724.1"/>
    <property type="status" value="JOINED"/>
    <property type="molecule type" value="Genomic_DNA"/>
</dbReference>
<dbReference type="EMBL" id="AF101087">
    <property type="protein sequence ID" value="AAF04724.1"/>
    <property type="status" value="JOINED"/>
    <property type="molecule type" value="Genomic_DNA"/>
</dbReference>
<dbReference type="EMBL" id="AF101088">
    <property type="protein sequence ID" value="AAF04724.1"/>
    <property type="status" value="JOINED"/>
    <property type="molecule type" value="Genomic_DNA"/>
</dbReference>
<dbReference type="EMBL" id="AF101089">
    <property type="protein sequence ID" value="AAF04724.1"/>
    <property type="status" value="JOINED"/>
    <property type="molecule type" value="Genomic_DNA"/>
</dbReference>
<dbReference type="EMBL" id="AF101090">
    <property type="protein sequence ID" value="AAF04724.1"/>
    <property type="status" value="JOINED"/>
    <property type="molecule type" value="Genomic_DNA"/>
</dbReference>
<dbReference type="EMBL" id="AF101091">
    <property type="protein sequence ID" value="AAF04724.1"/>
    <property type="status" value="JOINED"/>
    <property type="molecule type" value="Genomic_DNA"/>
</dbReference>
<dbReference type="EMBL" id="AF101092">
    <property type="protein sequence ID" value="AAF04724.1"/>
    <property type="status" value="JOINED"/>
    <property type="molecule type" value="Genomic_DNA"/>
</dbReference>
<dbReference type="EMBL" id="AF101093">
    <property type="protein sequence ID" value="AAF04724.1"/>
    <property type="status" value="JOINED"/>
    <property type="molecule type" value="Genomic_DNA"/>
</dbReference>
<dbReference type="EMBL" id="AF101094">
    <property type="protein sequence ID" value="AAF04724.1"/>
    <property type="status" value="JOINED"/>
    <property type="molecule type" value="Genomic_DNA"/>
</dbReference>
<dbReference type="EMBL" id="AF101095">
    <property type="protein sequence ID" value="AAF04724.1"/>
    <property type="status" value="JOINED"/>
    <property type="molecule type" value="Genomic_DNA"/>
</dbReference>
<dbReference type="EMBL" id="AF101096">
    <property type="protein sequence ID" value="AAF04724.1"/>
    <property type="status" value="JOINED"/>
    <property type="molecule type" value="Genomic_DNA"/>
</dbReference>
<dbReference type="EMBL" id="AF101097">
    <property type="protein sequence ID" value="AAF04724.1"/>
    <property type="status" value="JOINED"/>
    <property type="molecule type" value="Genomic_DNA"/>
</dbReference>
<dbReference type="EMBL" id="AF101098">
    <property type="protein sequence ID" value="AAF04724.1"/>
    <property type="status" value="JOINED"/>
    <property type="molecule type" value="Genomic_DNA"/>
</dbReference>
<dbReference type="EMBL" id="AF101099">
    <property type="protein sequence ID" value="AAF04724.1"/>
    <property type="status" value="JOINED"/>
    <property type="molecule type" value="Genomic_DNA"/>
</dbReference>
<dbReference type="EMBL" id="AF101100">
    <property type="protein sequence ID" value="AAF04724.1"/>
    <property type="status" value="JOINED"/>
    <property type="molecule type" value="Genomic_DNA"/>
</dbReference>
<dbReference type="EMBL" id="AF101101">
    <property type="protein sequence ID" value="AAF04724.1"/>
    <property type="status" value="JOINED"/>
    <property type="molecule type" value="Genomic_DNA"/>
</dbReference>
<dbReference type="EMBL" id="AF101102">
    <property type="protein sequence ID" value="AAF04724.1"/>
    <property type="status" value="JOINED"/>
    <property type="molecule type" value="Genomic_DNA"/>
</dbReference>
<dbReference type="EMBL" id="AF101103">
    <property type="protein sequence ID" value="AAF04724.1"/>
    <property type="status" value="JOINED"/>
    <property type="molecule type" value="Genomic_DNA"/>
</dbReference>
<dbReference type="EMBL" id="AF101104">
    <property type="protein sequence ID" value="AAF04724.1"/>
    <property type="status" value="JOINED"/>
    <property type="molecule type" value="Genomic_DNA"/>
</dbReference>
<dbReference type="EMBL" id="AF101105">
    <property type="protein sequence ID" value="AAF04724.1"/>
    <property type="status" value="JOINED"/>
    <property type="molecule type" value="Genomic_DNA"/>
</dbReference>
<dbReference type="EMBL" id="AF101106">
    <property type="protein sequence ID" value="AAF04724.1"/>
    <property type="status" value="JOINED"/>
    <property type="molecule type" value="Genomic_DNA"/>
</dbReference>
<dbReference type="EMBL" id="AF101107">
    <property type="protein sequence ID" value="AAF04724.1"/>
    <property type="status" value="JOINED"/>
    <property type="molecule type" value="Genomic_DNA"/>
</dbReference>
<dbReference type="EMBL" id="AF101108">
    <property type="protein sequence ID" value="AAF04724.1"/>
    <property type="status" value="JOINED"/>
    <property type="molecule type" value="Genomic_DNA"/>
</dbReference>
<dbReference type="EMBL" id="AF101109">
    <property type="protein sequence ID" value="AAF04724.1"/>
    <property type="status" value="JOINED"/>
    <property type="molecule type" value="Genomic_DNA"/>
</dbReference>
<dbReference type="EMBL" id="AF101110">
    <property type="protein sequence ID" value="AAF04724.1"/>
    <property type="status" value="JOINED"/>
    <property type="molecule type" value="Genomic_DNA"/>
</dbReference>
<dbReference type="EMBL" id="AF101111">
    <property type="protein sequence ID" value="AAF04724.1"/>
    <property type="status" value="JOINED"/>
    <property type="molecule type" value="Genomic_DNA"/>
</dbReference>
<dbReference type="EMBL" id="AF101112">
    <property type="protein sequence ID" value="AAF04725.1"/>
    <property type="molecule type" value="Genomic_DNA"/>
</dbReference>
<dbReference type="EMBL" id="AF101079">
    <property type="protein sequence ID" value="AAF04725.1"/>
    <property type="status" value="JOINED"/>
    <property type="molecule type" value="Genomic_DNA"/>
</dbReference>
<dbReference type="EMBL" id="AF101080">
    <property type="protein sequence ID" value="AAF04725.1"/>
    <property type="status" value="JOINED"/>
    <property type="molecule type" value="Genomic_DNA"/>
</dbReference>
<dbReference type="EMBL" id="AF101081">
    <property type="protein sequence ID" value="AAF04725.1"/>
    <property type="status" value="JOINED"/>
    <property type="molecule type" value="Genomic_DNA"/>
</dbReference>
<dbReference type="EMBL" id="AF101082">
    <property type="protein sequence ID" value="AAF04725.1"/>
    <property type="status" value="JOINED"/>
    <property type="molecule type" value="Genomic_DNA"/>
</dbReference>
<dbReference type="EMBL" id="AF101083">
    <property type="protein sequence ID" value="AAF04725.1"/>
    <property type="status" value="JOINED"/>
    <property type="molecule type" value="Genomic_DNA"/>
</dbReference>
<dbReference type="EMBL" id="AF101084">
    <property type="protein sequence ID" value="AAF04725.1"/>
    <property type="status" value="JOINED"/>
    <property type="molecule type" value="Genomic_DNA"/>
</dbReference>
<dbReference type="EMBL" id="AF101085">
    <property type="protein sequence ID" value="AAF04725.1"/>
    <property type="status" value="JOINED"/>
    <property type="molecule type" value="Genomic_DNA"/>
</dbReference>
<dbReference type="EMBL" id="AF101086">
    <property type="protein sequence ID" value="AAF04725.1"/>
    <property type="status" value="JOINED"/>
    <property type="molecule type" value="Genomic_DNA"/>
</dbReference>
<dbReference type="EMBL" id="AF101087">
    <property type="protein sequence ID" value="AAF04725.1"/>
    <property type="status" value="JOINED"/>
    <property type="molecule type" value="Genomic_DNA"/>
</dbReference>
<dbReference type="EMBL" id="AF101088">
    <property type="protein sequence ID" value="AAF04725.1"/>
    <property type="status" value="JOINED"/>
    <property type="molecule type" value="Genomic_DNA"/>
</dbReference>
<dbReference type="EMBL" id="AF101089">
    <property type="protein sequence ID" value="AAF04725.1"/>
    <property type="status" value="JOINED"/>
    <property type="molecule type" value="Genomic_DNA"/>
</dbReference>
<dbReference type="EMBL" id="AF101090">
    <property type="protein sequence ID" value="AAF04725.1"/>
    <property type="status" value="JOINED"/>
    <property type="molecule type" value="Genomic_DNA"/>
</dbReference>
<dbReference type="EMBL" id="AF101091">
    <property type="protein sequence ID" value="AAF04725.1"/>
    <property type="status" value="JOINED"/>
    <property type="molecule type" value="Genomic_DNA"/>
</dbReference>
<dbReference type="EMBL" id="AF101092">
    <property type="protein sequence ID" value="AAF04725.1"/>
    <property type="status" value="JOINED"/>
    <property type="molecule type" value="Genomic_DNA"/>
</dbReference>
<dbReference type="EMBL" id="AF101093">
    <property type="protein sequence ID" value="AAF04725.1"/>
    <property type="status" value="JOINED"/>
    <property type="molecule type" value="Genomic_DNA"/>
</dbReference>
<dbReference type="EMBL" id="AF101094">
    <property type="protein sequence ID" value="AAF04725.1"/>
    <property type="status" value="JOINED"/>
    <property type="molecule type" value="Genomic_DNA"/>
</dbReference>
<dbReference type="EMBL" id="AF101095">
    <property type="protein sequence ID" value="AAF04725.1"/>
    <property type="status" value="JOINED"/>
    <property type="molecule type" value="Genomic_DNA"/>
</dbReference>
<dbReference type="EMBL" id="AF101096">
    <property type="protein sequence ID" value="AAF04725.1"/>
    <property type="status" value="JOINED"/>
    <property type="molecule type" value="Genomic_DNA"/>
</dbReference>
<dbReference type="EMBL" id="AF101097">
    <property type="protein sequence ID" value="AAF04725.1"/>
    <property type="status" value="JOINED"/>
    <property type="molecule type" value="Genomic_DNA"/>
</dbReference>
<dbReference type="EMBL" id="AF101098">
    <property type="protein sequence ID" value="AAF04725.1"/>
    <property type="status" value="JOINED"/>
    <property type="molecule type" value="Genomic_DNA"/>
</dbReference>
<dbReference type="EMBL" id="AF101099">
    <property type="protein sequence ID" value="AAF04725.1"/>
    <property type="status" value="JOINED"/>
    <property type="molecule type" value="Genomic_DNA"/>
</dbReference>
<dbReference type="EMBL" id="AF101100">
    <property type="protein sequence ID" value="AAF04725.1"/>
    <property type="status" value="JOINED"/>
    <property type="molecule type" value="Genomic_DNA"/>
</dbReference>
<dbReference type="EMBL" id="AF101101">
    <property type="protein sequence ID" value="AAF04725.1"/>
    <property type="status" value="JOINED"/>
    <property type="molecule type" value="Genomic_DNA"/>
</dbReference>
<dbReference type="EMBL" id="AF101102">
    <property type="protein sequence ID" value="AAF04725.1"/>
    <property type="status" value="JOINED"/>
    <property type="molecule type" value="Genomic_DNA"/>
</dbReference>
<dbReference type="EMBL" id="AF101103">
    <property type="protein sequence ID" value="AAF04725.1"/>
    <property type="status" value="JOINED"/>
    <property type="molecule type" value="Genomic_DNA"/>
</dbReference>
<dbReference type="EMBL" id="AF101104">
    <property type="protein sequence ID" value="AAF04725.1"/>
    <property type="status" value="JOINED"/>
    <property type="molecule type" value="Genomic_DNA"/>
</dbReference>
<dbReference type="EMBL" id="AF101105">
    <property type="protein sequence ID" value="AAF04725.1"/>
    <property type="status" value="JOINED"/>
    <property type="molecule type" value="Genomic_DNA"/>
</dbReference>
<dbReference type="EMBL" id="AF101106">
    <property type="protein sequence ID" value="AAF04725.1"/>
    <property type="status" value="JOINED"/>
    <property type="molecule type" value="Genomic_DNA"/>
</dbReference>
<dbReference type="EMBL" id="AF101107">
    <property type="protein sequence ID" value="AAF04725.1"/>
    <property type="status" value="JOINED"/>
    <property type="molecule type" value="Genomic_DNA"/>
</dbReference>
<dbReference type="EMBL" id="AF101108">
    <property type="protein sequence ID" value="AAF04725.1"/>
    <property type="status" value="JOINED"/>
    <property type="molecule type" value="Genomic_DNA"/>
</dbReference>
<dbReference type="EMBL" id="AF101109">
    <property type="protein sequence ID" value="AAF04725.1"/>
    <property type="status" value="JOINED"/>
    <property type="molecule type" value="Genomic_DNA"/>
</dbReference>
<dbReference type="EMBL" id="AF101110">
    <property type="protein sequence ID" value="AAF04725.1"/>
    <property type="status" value="JOINED"/>
    <property type="molecule type" value="Genomic_DNA"/>
</dbReference>
<dbReference type="EMBL" id="AF101111">
    <property type="protein sequence ID" value="AAF04725.1"/>
    <property type="status" value="JOINED"/>
    <property type="molecule type" value="Genomic_DNA"/>
</dbReference>
<dbReference type="EMBL" id="AF101112">
    <property type="protein sequence ID" value="AAF04726.1"/>
    <property type="molecule type" value="Genomic_DNA"/>
</dbReference>
<dbReference type="EMBL" id="AF101079">
    <property type="protein sequence ID" value="AAF04726.1"/>
    <property type="status" value="JOINED"/>
    <property type="molecule type" value="Genomic_DNA"/>
</dbReference>
<dbReference type="EMBL" id="AF101080">
    <property type="protein sequence ID" value="AAF04726.1"/>
    <property type="status" value="JOINED"/>
    <property type="molecule type" value="Genomic_DNA"/>
</dbReference>
<dbReference type="EMBL" id="AF101081">
    <property type="protein sequence ID" value="AAF04726.1"/>
    <property type="status" value="JOINED"/>
    <property type="molecule type" value="Genomic_DNA"/>
</dbReference>
<dbReference type="EMBL" id="AF101082">
    <property type="protein sequence ID" value="AAF04726.1"/>
    <property type="status" value="JOINED"/>
    <property type="molecule type" value="Genomic_DNA"/>
</dbReference>
<dbReference type="EMBL" id="AF101083">
    <property type="protein sequence ID" value="AAF04726.1"/>
    <property type="status" value="JOINED"/>
    <property type="molecule type" value="Genomic_DNA"/>
</dbReference>
<dbReference type="EMBL" id="AF101084">
    <property type="protein sequence ID" value="AAF04726.1"/>
    <property type="status" value="JOINED"/>
    <property type="molecule type" value="Genomic_DNA"/>
</dbReference>
<dbReference type="EMBL" id="AF101085">
    <property type="protein sequence ID" value="AAF04726.1"/>
    <property type="status" value="JOINED"/>
    <property type="molecule type" value="Genomic_DNA"/>
</dbReference>
<dbReference type="EMBL" id="AF101086">
    <property type="protein sequence ID" value="AAF04726.1"/>
    <property type="status" value="JOINED"/>
    <property type="molecule type" value="Genomic_DNA"/>
</dbReference>
<dbReference type="EMBL" id="AF101087">
    <property type="protein sequence ID" value="AAF04726.1"/>
    <property type="status" value="JOINED"/>
    <property type="molecule type" value="Genomic_DNA"/>
</dbReference>
<dbReference type="EMBL" id="AF101088">
    <property type="protein sequence ID" value="AAF04726.1"/>
    <property type="status" value="JOINED"/>
    <property type="molecule type" value="Genomic_DNA"/>
</dbReference>
<dbReference type="EMBL" id="AF101089">
    <property type="protein sequence ID" value="AAF04726.1"/>
    <property type="status" value="JOINED"/>
    <property type="molecule type" value="Genomic_DNA"/>
</dbReference>
<dbReference type="EMBL" id="AF101090">
    <property type="protein sequence ID" value="AAF04726.1"/>
    <property type="status" value="JOINED"/>
    <property type="molecule type" value="Genomic_DNA"/>
</dbReference>
<dbReference type="EMBL" id="AF101091">
    <property type="protein sequence ID" value="AAF04726.1"/>
    <property type="status" value="JOINED"/>
    <property type="molecule type" value="Genomic_DNA"/>
</dbReference>
<dbReference type="EMBL" id="AF101092">
    <property type="protein sequence ID" value="AAF04726.1"/>
    <property type="status" value="JOINED"/>
    <property type="molecule type" value="Genomic_DNA"/>
</dbReference>
<dbReference type="EMBL" id="AF101093">
    <property type="protein sequence ID" value="AAF04726.1"/>
    <property type="status" value="JOINED"/>
    <property type="molecule type" value="Genomic_DNA"/>
</dbReference>
<dbReference type="EMBL" id="AF101094">
    <property type="protein sequence ID" value="AAF04726.1"/>
    <property type="status" value="JOINED"/>
    <property type="molecule type" value="Genomic_DNA"/>
</dbReference>
<dbReference type="EMBL" id="AF101095">
    <property type="protein sequence ID" value="AAF04726.1"/>
    <property type="status" value="JOINED"/>
    <property type="molecule type" value="Genomic_DNA"/>
</dbReference>
<dbReference type="EMBL" id="AF101096">
    <property type="protein sequence ID" value="AAF04726.1"/>
    <property type="status" value="JOINED"/>
    <property type="molecule type" value="Genomic_DNA"/>
</dbReference>
<dbReference type="EMBL" id="AF101097">
    <property type="protein sequence ID" value="AAF04726.1"/>
    <property type="status" value="JOINED"/>
    <property type="molecule type" value="Genomic_DNA"/>
</dbReference>
<dbReference type="EMBL" id="AF101098">
    <property type="protein sequence ID" value="AAF04726.1"/>
    <property type="status" value="JOINED"/>
    <property type="molecule type" value="Genomic_DNA"/>
</dbReference>
<dbReference type="EMBL" id="AF101099">
    <property type="protein sequence ID" value="AAF04726.1"/>
    <property type="status" value="JOINED"/>
    <property type="molecule type" value="Genomic_DNA"/>
</dbReference>
<dbReference type="EMBL" id="AF101100">
    <property type="protein sequence ID" value="AAF04726.1"/>
    <property type="status" value="JOINED"/>
    <property type="molecule type" value="Genomic_DNA"/>
</dbReference>
<dbReference type="EMBL" id="AF101101">
    <property type="protein sequence ID" value="AAF04726.1"/>
    <property type="status" value="JOINED"/>
    <property type="molecule type" value="Genomic_DNA"/>
</dbReference>
<dbReference type="EMBL" id="AF101102">
    <property type="protein sequence ID" value="AAF04726.1"/>
    <property type="status" value="JOINED"/>
    <property type="molecule type" value="Genomic_DNA"/>
</dbReference>
<dbReference type="EMBL" id="AF101103">
    <property type="protein sequence ID" value="AAF04726.1"/>
    <property type="status" value="JOINED"/>
    <property type="molecule type" value="Genomic_DNA"/>
</dbReference>
<dbReference type="EMBL" id="AF101104">
    <property type="protein sequence ID" value="AAF04726.1"/>
    <property type="status" value="JOINED"/>
    <property type="molecule type" value="Genomic_DNA"/>
</dbReference>
<dbReference type="EMBL" id="AF101105">
    <property type="protein sequence ID" value="AAF04726.1"/>
    <property type="status" value="JOINED"/>
    <property type="molecule type" value="Genomic_DNA"/>
</dbReference>
<dbReference type="EMBL" id="AF101106">
    <property type="protein sequence ID" value="AAF04726.1"/>
    <property type="status" value="JOINED"/>
    <property type="molecule type" value="Genomic_DNA"/>
</dbReference>
<dbReference type="EMBL" id="AF101107">
    <property type="protein sequence ID" value="AAF04726.1"/>
    <property type="status" value="JOINED"/>
    <property type="molecule type" value="Genomic_DNA"/>
</dbReference>
<dbReference type="EMBL" id="AF101108">
    <property type="protein sequence ID" value="AAF04726.1"/>
    <property type="status" value="JOINED"/>
    <property type="molecule type" value="Genomic_DNA"/>
</dbReference>
<dbReference type="EMBL" id="AF101109">
    <property type="protein sequence ID" value="AAF04726.1"/>
    <property type="status" value="JOINED"/>
    <property type="molecule type" value="Genomic_DNA"/>
</dbReference>
<dbReference type="EMBL" id="AF101110">
    <property type="protein sequence ID" value="AAF04726.1"/>
    <property type="status" value="JOINED"/>
    <property type="molecule type" value="Genomic_DNA"/>
</dbReference>
<dbReference type="EMBL" id="AF101111">
    <property type="protein sequence ID" value="AAF04726.1"/>
    <property type="status" value="JOINED"/>
    <property type="molecule type" value="Genomic_DNA"/>
</dbReference>
<dbReference type="EMBL" id="AC093150">
    <property type="status" value="NOT_ANNOTATED_CDS"/>
    <property type="molecule type" value="Genomic_DNA"/>
</dbReference>
<dbReference type="EMBL" id="AC099567">
    <property type="status" value="NOT_ANNOTATED_CDS"/>
    <property type="molecule type" value="Genomic_DNA"/>
</dbReference>
<dbReference type="EMBL" id="AL627203">
    <property type="status" value="NOT_ANNOTATED_CDS"/>
    <property type="molecule type" value="Genomic_DNA"/>
</dbReference>
<dbReference type="EMBL" id="CH471097">
    <property type="protein sequence ID" value="EAW72908.1"/>
    <property type="molecule type" value="Genomic_DNA"/>
</dbReference>
<dbReference type="EMBL" id="CH471097">
    <property type="protein sequence ID" value="EAW72910.1"/>
    <property type="molecule type" value="Genomic_DNA"/>
</dbReference>
<dbReference type="EMBL" id="BC117697">
    <property type="protein sequence ID" value="AAI17698.1"/>
    <property type="molecule type" value="mRNA"/>
</dbReference>
<dbReference type="EMBL" id="L38956">
    <property type="protein sequence ID" value="AAA79171.1"/>
    <property type="molecule type" value="Genomic_DNA"/>
</dbReference>
<dbReference type="CCDS" id="CCDS53348.1">
    <molecule id="P12107-3"/>
</dbReference>
<dbReference type="CCDS" id="CCDS778.1">
    <molecule id="P12107-1"/>
</dbReference>
<dbReference type="CCDS" id="CCDS780.2">
    <molecule id="P12107-4"/>
</dbReference>
<dbReference type="PIR" id="A35239">
    <property type="entry name" value="CGHU1E"/>
</dbReference>
<dbReference type="RefSeq" id="NP_001177638.1">
    <molecule id="P12107-3"/>
    <property type="nucleotide sequence ID" value="NM_001190709.2"/>
</dbReference>
<dbReference type="RefSeq" id="NP_001845.3">
    <molecule id="P12107-1"/>
    <property type="nucleotide sequence ID" value="NM_001854.3"/>
</dbReference>
<dbReference type="RefSeq" id="NP_542196.2">
    <molecule id="P12107-2"/>
    <property type="nucleotide sequence ID" value="NM_080629.3"/>
</dbReference>
<dbReference type="RefSeq" id="NP_542197.3">
    <molecule id="P12107-4"/>
    <property type="nucleotide sequence ID" value="NM_080630.4"/>
</dbReference>
<dbReference type="SMR" id="P12107"/>
<dbReference type="BioGRID" id="107698">
    <property type="interactions" value="23"/>
</dbReference>
<dbReference type="ComplexPortal" id="CPX-1750">
    <property type="entry name" value="Collagen type XI trimer variant 1"/>
</dbReference>
<dbReference type="ComplexPortal" id="CPX-1751">
    <property type="entry name" value="Collagen type XI trimer variant 2"/>
</dbReference>
<dbReference type="ComplexPortal" id="CPX-1752">
    <property type="entry name" value="Collagen type XI trimer variant 3"/>
</dbReference>
<dbReference type="FunCoup" id="P12107">
    <property type="interactions" value="168"/>
</dbReference>
<dbReference type="IntAct" id="P12107">
    <property type="interactions" value="3"/>
</dbReference>
<dbReference type="STRING" id="9606.ENSP00000359114"/>
<dbReference type="ChEMBL" id="CHEMBL2364188"/>
<dbReference type="GlyConnect" id="1130">
    <property type="glycosylation" value="1 N-Linked glycan (1 site)"/>
</dbReference>
<dbReference type="GlyCosmos" id="P12107">
    <property type="glycosylation" value="2 sites, 2 glycans"/>
</dbReference>
<dbReference type="GlyGen" id="P12107">
    <property type="glycosylation" value="10 sites, 2 N-linked glycans (1 site), 2 O-linked glycans (7 sites)"/>
</dbReference>
<dbReference type="iPTMnet" id="P12107"/>
<dbReference type="PhosphoSitePlus" id="P12107"/>
<dbReference type="BioMuta" id="COL11A1"/>
<dbReference type="DMDM" id="215274245"/>
<dbReference type="CPTAC" id="CPTAC-1201"/>
<dbReference type="CPTAC" id="CPTAC-1202"/>
<dbReference type="jPOST" id="P12107"/>
<dbReference type="MassIVE" id="P12107"/>
<dbReference type="PaxDb" id="9606-ENSP00000359114"/>
<dbReference type="PeptideAtlas" id="P12107"/>
<dbReference type="ProteomicsDB" id="19514"/>
<dbReference type="ProteomicsDB" id="52826">
    <molecule id="P12107-1"/>
</dbReference>
<dbReference type="ProteomicsDB" id="52827">
    <molecule id="P12107-2"/>
</dbReference>
<dbReference type="ProteomicsDB" id="52828">
    <molecule id="P12107-3"/>
</dbReference>
<dbReference type="ABCD" id="P12107">
    <property type="antibodies" value="1 sequenced antibody"/>
</dbReference>
<dbReference type="Antibodypedia" id="33704">
    <property type="antibodies" value="153 antibodies from 30 providers"/>
</dbReference>
<dbReference type="DNASU" id="1301"/>
<dbReference type="Ensembl" id="ENST00000353414.8">
    <molecule id="P12107-3"/>
    <property type="protein sequence ID" value="ENSP00000302551.6"/>
    <property type="gene ID" value="ENSG00000060718.22"/>
</dbReference>
<dbReference type="Ensembl" id="ENST00000358392.6">
    <molecule id="P12107-2"/>
    <property type="protein sequence ID" value="ENSP00000351163.2"/>
    <property type="gene ID" value="ENSG00000060718.22"/>
</dbReference>
<dbReference type="Ensembl" id="ENST00000370096.9">
    <molecule id="P12107-1"/>
    <property type="protein sequence ID" value="ENSP00000359114.3"/>
    <property type="gene ID" value="ENSG00000060718.22"/>
</dbReference>
<dbReference type="Ensembl" id="ENST00000512756.5">
    <molecule id="P12107-4"/>
    <property type="protein sequence ID" value="ENSP00000426533.1"/>
    <property type="gene ID" value="ENSG00000060718.22"/>
</dbReference>
<dbReference type="GeneID" id="1301"/>
<dbReference type="KEGG" id="hsa:1301"/>
<dbReference type="MANE-Select" id="ENST00000370096.9">
    <property type="protein sequence ID" value="ENSP00000359114.3"/>
    <property type="RefSeq nucleotide sequence ID" value="NM_001854.4"/>
    <property type="RefSeq protein sequence ID" value="NP_001845.3"/>
</dbReference>
<dbReference type="UCSC" id="uc001dul.4">
    <molecule id="P12107-1"/>
    <property type="organism name" value="human"/>
</dbReference>
<dbReference type="AGR" id="HGNC:2186"/>
<dbReference type="CTD" id="1301"/>
<dbReference type="DisGeNET" id="1301"/>
<dbReference type="GeneCards" id="COL11A1"/>
<dbReference type="GeneReviews" id="COL11A1"/>
<dbReference type="HGNC" id="HGNC:2186">
    <property type="gene designation" value="COL11A1"/>
</dbReference>
<dbReference type="HPA" id="ENSG00000060718">
    <property type="expression patterns" value="Tissue enhanced (placenta, retina)"/>
</dbReference>
<dbReference type="MalaCards" id="COL11A1"/>
<dbReference type="MIM" id="120280">
    <property type="type" value="gene"/>
</dbReference>
<dbReference type="MIM" id="154780">
    <property type="type" value="phenotype"/>
</dbReference>
<dbReference type="MIM" id="228520">
    <property type="type" value="phenotype"/>
</dbReference>
<dbReference type="MIM" id="604841">
    <property type="type" value="phenotype"/>
</dbReference>
<dbReference type="MIM" id="618533">
    <property type="type" value="phenotype"/>
</dbReference>
<dbReference type="neXtProt" id="NX_P12107"/>
<dbReference type="OpenTargets" id="ENSG00000060718"/>
<dbReference type="Orphanet" id="440354">
    <property type="disease" value="Autosomal dominant myopia-midfacial retrusion-sensorineural hearing loss-rhizomelic dysplasia syndrome"/>
</dbReference>
<dbReference type="Orphanet" id="2021">
    <property type="disease" value="Fibrochondrogenesis"/>
</dbReference>
<dbReference type="Orphanet" id="560">
    <property type="disease" value="Marshall syndrome"/>
</dbReference>
<dbReference type="Orphanet" id="90635">
    <property type="disease" value="Rare autosomal dominant non-syndromic sensorineural deafness type DFNA"/>
</dbReference>
<dbReference type="Orphanet" id="90654">
    <property type="disease" value="Stickler syndrome type 2"/>
</dbReference>
<dbReference type="PharmGKB" id="PA26702"/>
<dbReference type="VEuPathDB" id="HostDB:ENSG00000060718"/>
<dbReference type="eggNOG" id="KOG3544">
    <property type="taxonomic scope" value="Eukaryota"/>
</dbReference>
<dbReference type="GeneTree" id="ENSGT00940000154535"/>
<dbReference type="HOGENOM" id="CLU_001074_2_1_1"/>
<dbReference type="InParanoid" id="P12107"/>
<dbReference type="OMA" id="KGNMQGP"/>
<dbReference type="OrthoDB" id="8939548at2759"/>
<dbReference type="PAN-GO" id="P12107">
    <property type="GO annotations" value="5 GO annotations based on evolutionary models"/>
</dbReference>
<dbReference type="PhylomeDB" id="P12107"/>
<dbReference type="TreeFam" id="TF323987"/>
<dbReference type="PathwayCommons" id="P12107"/>
<dbReference type="Reactome" id="R-HSA-1442490">
    <property type="pathway name" value="Collagen degradation"/>
</dbReference>
<dbReference type="Reactome" id="R-HSA-1650814">
    <property type="pathway name" value="Collagen biosynthesis and modifying enzymes"/>
</dbReference>
<dbReference type="Reactome" id="R-HSA-2022090">
    <property type="pathway name" value="Assembly of collagen fibrils and other multimeric structures"/>
</dbReference>
<dbReference type="Reactome" id="R-HSA-3000171">
    <property type="pathway name" value="Non-integrin membrane-ECM interactions"/>
</dbReference>
<dbReference type="Reactome" id="R-HSA-8874081">
    <property type="pathway name" value="MET activates PTK2 signaling"/>
</dbReference>
<dbReference type="Reactome" id="R-HSA-8948216">
    <property type="pathway name" value="Collagen chain trimerization"/>
</dbReference>
<dbReference type="SignaLink" id="P12107"/>
<dbReference type="SIGNOR" id="P12107"/>
<dbReference type="BioGRID-ORCS" id="1301">
    <property type="hits" value="13 hits in 1148 CRISPR screens"/>
</dbReference>
<dbReference type="ChiTaRS" id="COL11A1">
    <property type="organism name" value="human"/>
</dbReference>
<dbReference type="GeneWiki" id="Collagen,_type_XI,_alpha_1"/>
<dbReference type="GenomeRNAi" id="1301"/>
<dbReference type="Pharos" id="P12107">
    <property type="development level" value="Tbio"/>
</dbReference>
<dbReference type="PRO" id="PR:P12107"/>
<dbReference type="Proteomes" id="UP000005640">
    <property type="component" value="Chromosome 1"/>
</dbReference>
<dbReference type="RNAct" id="P12107">
    <property type="molecule type" value="protein"/>
</dbReference>
<dbReference type="Bgee" id="ENSG00000060718">
    <property type="expression patterns" value="Expressed in tibia and 145 other cell types or tissues"/>
</dbReference>
<dbReference type="ExpressionAtlas" id="P12107">
    <property type="expression patterns" value="baseline and differential"/>
</dbReference>
<dbReference type="GO" id="GO:0005592">
    <property type="term" value="C:collagen type XI trimer"/>
    <property type="evidence" value="ECO:0000314"/>
    <property type="project" value="UniProtKB"/>
</dbReference>
<dbReference type="GO" id="GO:0062023">
    <property type="term" value="C:collagen-containing extracellular matrix"/>
    <property type="evidence" value="ECO:0007005"/>
    <property type="project" value="BHF-UCL"/>
</dbReference>
<dbReference type="GO" id="GO:0005788">
    <property type="term" value="C:endoplasmic reticulum lumen"/>
    <property type="evidence" value="ECO:0000304"/>
    <property type="project" value="Reactome"/>
</dbReference>
<dbReference type="GO" id="GO:0005576">
    <property type="term" value="C:extracellular region"/>
    <property type="evidence" value="ECO:0000304"/>
    <property type="project" value="Reactome"/>
</dbReference>
<dbReference type="GO" id="GO:0005615">
    <property type="term" value="C:extracellular space"/>
    <property type="evidence" value="ECO:0000318"/>
    <property type="project" value="GO_Central"/>
</dbReference>
<dbReference type="GO" id="GO:0050840">
    <property type="term" value="F:extracellular matrix binding"/>
    <property type="evidence" value="ECO:0000303"/>
    <property type="project" value="UniProtKB"/>
</dbReference>
<dbReference type="GO" id="GO:0005201">
    <property type="term" value="F:extracellular matrix structural constituent"/>
    <property type="evidence" value="ECO:0000303"/>
    <property type="project" value="UniProtKB"/>
</dbReference>
<dbReference type="GO" id="GO:0030020">
    <property type="term" value="F:extracellular matrix structural constituent conferring tensile strength"/>
    <property type="evidence" value="ECO:0000318"/>
    <property type="project" value="GO_Central"/>
</dbReference>
<dbReference type="GO" id="GO:0008201">
    <property type="term" value="F:heparin binding"/>
    <property type="evidence" value="ECO:0000318"/>
    <property type="project" value="GO_Central"/>
</dbReference>
<dbReference type="GO" id="GO:0046872">
    <property type="term" value="F:metal ion binding"/>
    <property type="evidence" value="ECO:0007669"/>
    <property type="project" value="UniProtKB-KW"/>
</dbReference>
<dbReference type="GO" id="GO:0030674">
    <property type="term" value="F:protein-macromolecule adaptor activity"/>
    <property type="evidence" value="ECO:0000303"/>
    <property type="project" value="UniProtKB"/>
</dbReference>
<dbReference type="GO" id="GO:0001502">
    <property type="term" value="P:cartilage condensation"/>
    <property type="evidence" value="ECO:0007669"/>
    <property type="project" value="Ensembl"/>
</dbReference>
<dbReference type="GO" id="GO:0002063">
    <property type="term" value="P:chondrocyte development"/>
    <property type="evidence" value="ECO:0007669"/>
    <property type="project" value="Ensembl"/>
</dbReference>
<dbReference type="GO" id="GO:0030199">
    <property type="term" value="P:collagen fibril organization"/>
    <property type="evidence" value="ECO:0000303"/>
    <property type="project" value="UniProtKB"/>
</dbReference>
<dbReference type="GO" id="GO:0050910">
    <property type="term" value="P:detection of mechanical stimulus involved in sensory perception of sound"/>
    <property type="evidence" value="ECO:0000315"/>
    <property type="project" value="UniProtKB"/>
</dbReference>
<dbReference type="GO" id="GO:0048704">
    <property type="term" value="P:embryonic skeletal system morphogenesis"/>
    <property type="evidence" value="ECO:0007669"/>
    <property type="project" value="Ensembl"/>
</dbReference>
<dbReference type="GO" id="GO:0035987">
    <property type="term" value="P:endodermal cell differentiation"/>
    <property type="evidence" value="ECO:0000270"/>
    <property type="project" value="UniProtKB"/>
</dbReference>
<dbReference type="GO" id="GO:0030198">
    <property type="term" value="P:extracellular matrix organization"/>
    <property type="evidence" value="ECO:0000303"/>
    <property type="project" value="UniProtKB"/>
</dbReference>
<dbReference type="GO" id="GO:0042472">
    <property type="term" value="P:inner ear morphogenesis"/>
    <property type="evidence" value="ECO:0007669"/>
    <property type="project" value="Ensembl"/>
</dbReference>
<dbReference type="GO" id="GO:0006029">
    <property type="term" value="P:proteoglycan metabolic process"/>
    <property type="evidence" value="ECO:0007669"/>
    <property type="project" value="Ensembl"/>
</dbReference>
<dbReference type="GO" id="GO:0007605">
    <property type="term" value="P:sensory perception of sound"/>
    <property type="evidence" value="ECO:0000315"/>
    <property type="project" value="UniProtKB"/>
</dbReference>
<dbReference type="GO" id="GO:0035989">
    <property type="term" value="P:tendon development"/>
    <property type="evidence" value="ECO:0007669"/>
    <property type="project" value="Ensembl"/>
</dbReference>
<dbReference type="GO" id="GO:0055010">
    <property type="term" value="P:ventricular cardiac muscle tissue morphogenesis"/>
    <property type="evidence" value="ECO:0007669"/>
    <property type="project" value="Ensembl"/>
</dbReference>
<dbReference type="GO" id="GO:0007601">
    <property type="term" value="P:visual perception"/>
    <property type="evidence" value="ECO:0000315"/>
    <property type="project" value="UniProtKB"/>
</dbReference>
<dbReference type="CDD" id="cd00110">
    <property type="entry name" value="LamG"/>
    <property type="match status" value="1"/>
</dbReference>
<dbReference type="FunFam" id="2.60.120.1000:FF:000002">
    <property type="entry name" value="Collagen XI alpha 1 chain"/>
    <property type="match status" value="1"/>
</dbReference>
<dbReference type="FunFam" id="2.60.120.200:FF:000016">
    <property type="entry name" value="Collagen XI alpha 1 chain"/>
    <property type="match status" value="1"/>
</dbReference>
<dbReference type="Gene3D" id="2.60.120.1000">
    <property type="match status" value="1"/>
</dbReference>
<dbReference type="Gene3D" id="2.60.120.200">
    <property type="match status" value="1"/>
</dbReference>
<dbReference type="InterPro" id="IPR008160">
    <property type="entry name" value="Collagen"/>
</dbReference>
<dbReference type="InterPro" id="IPR050149">
    <property type="entry name" value="Collagen_superfamily"/>
</dbReference>
<dbReference type="InterPro" id="IPR013320">
    <property type="entry name" value="ConA-like_dom_sf"/>
</dbReference>
<dbReference type="InterPro" id="IPR000885">
    <property type="entry name" value="Fib_collagen_C"/>
</dbReference>
<dbReference type="InterPro" id="IPR001791">
    <property type="entry name" value="Laminin_G"/>
</dbReference>
<dbReference type="InterPro" id="IPR048287">
    <property type="entry name" value="TSPN-like_N"/>
</dbReference>
<dbReference type="PANTHER" id="PTHR24023">
    <property type="entry name" value="COLLAGEN ALPHA"/>
    <property type="match status" value="1"/>
</dbReference>
<dbReference type="PANTHER" id="PTHR24023:SF1082">
    <property type="entry name" value="COLLAGEN TRIPLE HELIX REPEAT"/>
    <property type="match status" value="1"/>
</dbReference>
<dbReference type="Pfam" id="PF01410">
    <property type="entry name" value="COLFI"/>
    <property type="match status" value="1"/>
</dbReference>
<dbReference type="Pfam" id="PF01391">
    <property type="entry name" value="Collagen"/>
    <property type="match status" value="5"/>
</dbReference>
<dbReference type="Pfam" id="PF02210">
    <property type="entry name" value="Laminin_G_2"/>
    <property type="match status" value="1"/>
</dbReference>
<dbReference type="SMART" id="SM00038">
    <property type="entry name" value="COLFI"/>
    <property type="match status" value="1"/>
</dbReference>
<dbReference type="SMART" id="SM00282">
    <property type="entry name" value="LamG"/>
    <property type="match status" value="1"/>
</dbReference>
<dbReference type="SMART" id="SM00210">
    <property type="entry name" value="TSPN"/>
    <property type="match status" value="1"/>
</dbReference>
<dbReference type="SUPFAM" id="SSF49899">
    <property type="entry name" value="Concanavalin A-like lectins/glucanases"/>
    <property type="match status" value="1"/>
</dbReference>
<dbReference type="PROSITE" id="PS51461">
    <property type="entry name" value="NC1_FIB"/>
    <property type="match status" value="1"/>
</dbReference>
<protein>
    <recommendedName>
        <fullName>Collagen alpha-1(XI) chain</fullName>
    </recommendedName>
</protein>
<keyword id="KW-0025">Alternative splicing</keyword>
<keyword id="KW-0106">Calcium</keyword>
<keyword id="KW-0898">Cataract</keyword>
<keyword id="KW-0176">Collagen</keyword>
<keyword id="KW-0209">Deafness</keyword>
<keyword id="KW-0903">Direct protein sequencing</keyword>
<keyword id="KW-0225">Disease variant</keyword>
<keyword id="KW-1015">Disulfide bond</keyword>
<keyword id="KW-0242">Dwarfism</keyword>
<keyword id="KW-0038">Ectodermal dysplasia</keyword>
<keyword id="KW-0272">Extracellular matrix</keyword>
<keyword id="KW-0325">Glycoprotein</keyword>
<keyword id="KW-0379">Hydroxylation</keyword>
<keyword id="KW-0479">Metal-binding</keyword>
<keyword id="KW-1010">Non-syndromic deafness</keyword>
<keyword id="KW-1267">Proteomics identification</keyword>
<keyword id="KW-1185">Reference proteome</keyword>
<keyword id="KW-0677">Repeat</keyword>
<keyword id="KW-0964">Secreted</keyword>
<keyword id="KW-0732">Signal</keyword>
<keyword id="KW-0757">Stickler syndrome</keyword>
<gene>
    <name type="primary">COL11A1</name>
    <name type="synonym">COLL6</name>
</gene>
<feature type="signal peptide" evidence="2">
    <location>
        <begin position="1"/>
        <end position="35"/>
    </location>
</feature>
<feature type="propeptide" id="PRO_0000005774" description="N-terminal propeptide" evidence="2">
    <location>
        <begin position="36"/>
        <end position="511"/>
    </location>
</feature>
<feature type="chain" id="PRO_0000005775" description="Collagen alpha-1(XI) chain">
    <location>
        <begin position="512"/>
        <end position="1563"/>
    </location>
</feature>
<feature type="propeptide" id="PRO_0000005776" description="C-terminal propeptide">
    <location>
        <begin position="1564"/>
        <end position="1806"/>
    </location>
</feature>
<feature type="domain" description="Laminin G-like">
    <location>
        <begin position="71"/>
        <end position="243"/>
    </location>
</feature>
<feature type="domain" description="Collagen-like 1">
    <location>
        <begin position="442"/>
        <end position="490"/>
    </location>
</feature>
<feature type="domain" description="Collagen-like 2">
    <location>
        <begin position="532"/>
        <end position="586"/>
    </location>
</feature>
<feature type="domain" description="Collagen-like 3">
    <location>
        <begin position="583"/>
        <end position="641"/>
    </location>
</feature>
<feature type="domain" description="Collagen-like 4">
    <location>
        <begin position="616"/>
        <end position="674"/>
    </location>
</feature>
<feature type="domain" description="Collagen-like 5">
    <location>
        <begin position="643"/>
        <end position="699"/>
    </location>
</feature>
<feature type="domain" description="Collagen-like 6">
    <location>
        <begin position="1393"/>
        <end position="1450"/>
    </location>
</feature>
<feature type="domain" description="Collagen-like 7">
    <location>
        <begin position="1429"/>
        <end position="1487"/>
    </location>
</feature>
<feature type="domain" description="Collagen-like 8">
    <location>
        <begin position="1483"/>
        <end position="1541"/>
    </location>
</feature>
<feature type="domain" description="Fibrillar collagen NC1" evidence="3">
    <location>
        <begin position="1577"/>
        <end position="1805"/>
    </location>
</feature>
<feature type="region of interest" description="Nonhelical region">
    <location>
        <begin position="230"/>
        <end position="419"/>
    </location>
</feature>
<feature type="region of interest" description="Triple-helical region (interrupted)">
    <location>
        <begin position="420"/>
        <end position="508"/>
    </location>
</feature>
<feature type="region of interest" description="Disordered" evidence="4">
    <location>
        <begin position="439"/>
        <end position="508"/>
    </location>
</feature>
<feature type="region of interest" description="Short nonhelical segment">
    <location>
        <begin position="509"/>
        <end position="511"/>
    </location>
</feature>
<feature type="region of interest" description="Telopeptide">
    <location>
        <begin position="512"/>
        <end position="528"/>
    </location>
</feature>
<feature type="region of interest" description="Disordered" evidence="4">
    <location>
        <begin position="528"/>
        <end position="1563"/>
    </location>
</feature>
<feature type="region of interest" description="Triple-helical region">
    <location>
        <begin position="529"/>
        <end position="1542"/>
    </location>
</feature>
<feature type="region of interest" description="Nonhelical region (C-terminal)">
    <location>
        <begin position="1543"/>
        <end position="1563"/>
    </location>
</feature>
<feature type="compositionally biased region" description="Low complexity" evidence="4">
    <location>
        <begin position="449"/>
        <end position="461"/>
    </location>
</feature>
<feature type="compositionally biased region" description="Low complexity" evidence="4">
    <location>
        <begin position="479"/>
        <end position="496"/>
    </location>
</feature>
<feature type="compositionally biased region" description="Gly residues" evidence="4">
    <location>
        <begin position="541"/>
        <end position="550"/>
    </location>
</feature>
<feature type="compositionally biased region" description="Gly residues" evidence="4">
    <location>
        <begin position="583"/>
        <end position="592"/>
    </location>
</feature>
<feature type="compositionally biased region" description="Low complexity" evidence="4">
    <location>
        <begin position="641"/>
        <end position="662"/>
    </location>
</feature>
<feature type="compositionally biased region" description="Pro residues" evidence="4">
    <location>
        <begin position="699"/>
        <end position="710"/>
    </location>
</feature>
<feature type="compositionally biased region" description="Low complexity" evidence="4">
    <location>
        <begin position="717"/>
        <end position="728"/>
    </location>
</feature>
<feature type="compositionally biased region" description="Basic and acidic residues" evidence="4">
    <location>
        <begin position="807"/>
        <end position="816"/>
    </location>
</feature>
<feature type="compositionally biased region" description="Low complexity" evidence="4">
    <location>
        <begin position="875"/>
        <end position="903"/>
    </location>
</feature>
<feature type="compositionally biased region" description="Low complexity" evidence="4">
    <location>
        <begin position="918"/>
        <end position="927"/>
    </location>
</feature>
<feature type="compositionally biased region" description="Low complexity" evidence="4">
    <location>
        <begin position="941"/>
        <end position="960"/>
    </location>
</feature>
<feature type="compositionally biased region" description="Low complexity" evidence="4">
    <location>
        <begin position="971"/>
        <end position="981"/>
    </location>
</feature>
<feature type="compositionally biased region" description="Low complexity" evidence="4">
    <location>
        <begin position="1032"/>
        <end position="1041"/>
    </location>
</feature>
<feature type="compositionally biased region" description="Low complexity" evidence="4">
    <location>
        <begin position="1058"/>
        <end position="1074"/>
    </location>
</feature>
<feature type="compositionally biased region" description="Pro residues" evidence="4">
    <location>
        <begin position="1076"/>
        <end position="1085"/>
    </location>
</feature>
<feature type="compositionally biased region" description="Low complexity" evidence="4">
    <location>
        <begin position="1086"/>
        <end position="1110"/>
    </location>
</feature>
<feature type="compositionally biased region" description="Gly residues" evidence="4">
    <location>
        <begin position="1162"/>
        <end position="1171"/>
    </location>
</feature>
<feature type="compositionally biased region" description="Pro residues" evidence="4">
    <location>
        <begin position="1218"/>
        <end position="1229"/>
    </location>
</feature>
<feature type="compositionally biased region" description="Pro residues" evidence="4">
    <location>
        <begin position="1343"/>
        <end position="1362"/>
    </location>
</feature>
<feature type="compositionally biased region" description="Low complexity" evidence="4">
    <location>
        <begin position="1385"/>
        <end position="1394"/>
    </location>
</feature>
<feature type="compositionally biased region" description="Low complexity" evidence="4">
    <location>
        <begin position="1419"/>
        <end position="1428"/>
    </location>
</feature>
<feature type="compositionally biased region" description="Pro residues" evidence="4">
    <location>
        <begin position="1430"/>
        <end position="1439"/>
    </location>
</feature>
<feature type="compositionally biased region" description="Low complexity" evidence="4">
    <location>
        <begin position="1455"/>
        <end position="1464"/>
    </location>
</feature>
<feature type="compositionally biased region" description="Gly residues" evidence="4">
    <location>
        <begin position="1483"/>
        <end position="1492"/>
    </location>
</feature>
<feature type="compositionally biased region" description="Pro residues" evidence="4">
    <location>
        <begin position="1493"/>
        <end position="1509"/>
    </location>
</feature>
<feature type="compositionally biased region" description="Pro residues" evidence="4">
    <location>
        <begin position="1530"/>
        <end position="1539"/>
    </location>
</feature>
<feature type="binding site" evidence="1">
    <location>
        <position position="1625"/>
    </location>
    <ligand>
        <name>Ca(2+)</name>
        <dbReference type="ChEBI" id="CHEBI:29108"/>
    </ligand>
</feature>
<feature type="binding site" evidence="1">
    <location>
        <position position="1627"/>
    </location>
    <ligand>
        <name>Ca(2+)</name>
        <dbReference type="ChEBI" id="CHEBI:29108"/>
    </ligand>
</feature>
<feature type="binding site" evidence="1">
    <location>
        <position position="1628"/>
    </location>
    <ligand>
        <name>Ca(2+)</name>
        <dbReference type="ChEBI" id="CHEBI:29108"/>
    </ligand>
</feature>
<feature type="binding site" evidence="1">
    <location>
        <position position="1630"/>
    </location>
    <ligand>
        <name>Ca(2+)</name>
        <dbReference type="ChEBI" id="CHEBI:29108"/>
    </ligand>
</feature>
<feature type="binding site" evidence="1">
    <location>
        <position position="1633"/>
    </location>
    <ligand>
        <name>Ca(2+)</name>
        <dbReference type="ChEBI" id="CHEBI:29108"/>
    </ligand>
</feature>
<feature type="modified residue" description="Allysine" evidence="16">
    <location>
        <position position="612"/>
    </location>
</feature>
<feature type="modified residue" description="Allysine" evidence="16">
    <location>
        <position position="1452"/>
    </location>
</feature>
<feature type="glycosylation site" description="N-linked (GlcNAc...) asparagine" evidence="2">
    <location>
        <position position="1640"/>
    </location>
</feature>
<feature type="disulfide bond" evidence="3">
    <location>
        <begin position="61"/>
        <end position="243"/>
    </location>
</feature>
<feature type="disulfide bond" evidence="3">
    <location>
        <begin position="182"/>
        <end position="236"/>
    </location>
</feature>
<feature type="disulfide bond" evidence="3">
    <location>
        <begin position="1607"/>
        <end position="1639"/>
    </location>
</feature>
<feature type="disulfide bond" description="Interchain" evidence="3">
    <location>
        <position position="1630"/>
    </location>
</feature>
<feature type="disulfide bond" evidence="3">
    <location>
        <begin position="1648"/>
        <end position="1803"/>
    </location>
</feature>
<feature type="disulfide bond" evidence="3">
    <location>
        <begin position="1714"/>
        <end position="1757"/>
    </location>
</feature>
<feature type="splice variant" id="VSP_001145" description="In isoform B." evidence="15">
    <original>YAPEDIIEYDYEYGEAEYKEAESVTEGPTVTEETIAQTE</original>
    <variation>KKKSNFKKKMRTVATKSKEKSKKFTPPKSEKFSSKKKKSYQASAKAKLGVK</variation>
    <location>
        <begin position="261"/>
        <end position="299"/>
    </location>
</feature>
<feature type="splice variant" id="VSP_001146" description="In isoform C." evidence="15">
    <location>
        <begin position="261"/>
        <end position="299"/>
    </location>
</feature>
<feature type="splice variant" id="VSP_046318" description="In isoform 4." evidence="14">
    <location>
        <begin position="300"/>
        <end position="415"/>
    </location>
</feature>
<feature type="sequence variant" id="VAR_047723" description="In dbSNP:rs12025888.">
    <original>W</original>
    <variation>G</variation>
    <location>
        <position position="8"/>
    </location>
</feature>
<feature type="sequence variant" id="VAR_047724" description="In dbSNP:rs11164663.">
    <original>D</original>
    <variation>E</variation>
    <location>
        <position position="46"/>
    </location>
</feature>
<feature type="sequence variant" id="VAR_047725" description="In dbSNP:rs12143815.">
    <original>G</original>
    <variation>S</variation>
    <location>
        <position position="559"/>
    </location>
</feature>
<feature type="sequence variant" id="VAR_063675" description="In STL2; dbSNP:rs2101854719." evidence="9">
    <original>G</original>
    <variation>V</variation>
    <location>
        <position position="565"/>
    </location>
</feature>
<feature type="sequence variant" id="VAR_013583" description="In STL2; dbSNP:rs121912943." evidence="12">
    <original>G</original>
    <variation>V</variation>
    <location>
        <position position="625"/>
    </location>
</feature>
<feature type="sequence variant" id="VAR_013584" description="In STL2; overlapping phenotype with Marshall syndrome; dbSNP:rs749663226." evidence="5">
    <original>G</original>
    <variation>R</variation>
    <location>
        <position position="676"/>
    </location>
</feature>
<feature type="sequence variant" id="VAR_065904" description="In FBCG1; dbSNP:rs2101750154." evidence="10">
    <original>G</original>
    <variation>R</variation>
    <location>
        <position position="796"/>
    </location>
</feature>
<feature type="sequence variant" id="VAR_013585" description="In STL2; overlapping phenotype with Marshall syndrome." evidence="5">
    <location>
        <begin position="921"/>
        <end position="926"/>
    </location>
</feature>
<feature type="sequence variant" id="VAR_063676" description="In STL2." evidence="9">
    <original>G</original>
    <variation>R</variation>
    <location>
        <position position="1027"/>
    </location>
</feature>
<feature type="sequence variant" id="VAR_065905" description="In FBCG1." evidence="10">
    <original>G</original>
    <variation>R</variation>
    <location>
        <position position="1042"/>
    </location>
</feature>
<feature type="sequence variant" id="VAR_063677" description="In STL2." evidence="9">
    <location>
        <begin position="1110"/>
        <end position="1118"/>
    </location>
</feature>
<feature type="sequence variant" id="VAR_013586" description="In STL2; overlapping phenotype with Marshall syndrome." evidence="5">
    <location>
        <begin position="1313"/>
        <end position="1315"/>
    </location>
</feature>
<feature type="sequence variant" id="VAR_047726" description="In dbSNP:rs3753841." evidence="5 6 7">
    <original>P</original>
    <variation>L</variation>
    <location>
        <position position="1323"/>
    </location>
</feature>
<feature type="sequence variant" id="VAR_035743" description="In a breast cancer sample; somatic mutation." evidence="8">
    <original>A</original>
    <variation>V</variation>
    <location>
        <position position="1326"/>
    </location>
</feature>
<feature type="sequence variant" id="VAR_035744" description="In a breast cancer sample; somatic mutation; dbSNP:rs750014974." evidence="8">
    <original>Q</original>
    <variation>K</variation>
    <location>
        <position position="1328"/>
    </location>
</feature>
<feature type="sequence variant" id="VAR_035745" description="In a breast cancer sample; somatic mutation." evidence="8">
    <original>Q</original>
    <variation>L</variation>
    <location>
        <position position="1328"/>
    </location>
</feature>
<feature type="sequence variant" id="VAR_063678" description="In STL2; dbSNP:rs1553193913." evidence="9">
    <original>G</original>
    <variation>D</variation>
    <location>
        <position position="1513"/>
    </location>
</feature>
<feature type="sequence variant" id="VAR_013587" description="In STL2; overlapping phenotype with Marshall syndrome; dbSNP:rs1553193910." evidence="5 9">
    <original>G</original>
    <variation>V</variation>
    <location>
        <position position="1516"/>
    </location>
</feature>
<feature type="sequence variant" id="VAR_047727" description="In dbSNP:rs1676486." evidence="5 6 7 13">
    <original>S</original>
    <variation>P</variation>
    <location>
        <position position="1535"/>
    </location>
</feature>
<feature type="sequence variant" id="VAR_047728" description="In dbSNP:rs1975916.">
    <original>L</original>
    <variation>F</variation>
    <location>
        <position position="1805"/>
    </location>
</feature>
<feature type="sequence conflict" description="In Ref. 1; AAA51891." evidence="15" ref="1">
    <original>KDGL</original>
    <variation>RMGC</variation>
    <location>
        <begin position="941"/>
        <end position="944"/>
    </location>
</feature>
<feature type="sequence conflict" description="In Ref. 1; AAA51891." evidence="15" ref="1">
    <original>H</original>
    <variation>Y</variation>
    <location>
        <position position="986"/>
    </location>
</feature>
<feature type="sequence conflict" description="In Ref. 1; AAA51891." evidence="15" ref="1">
    <original>P</original>
    <variation>R</variation>
    <location>
        <position position="1074"/>
    </location>
</feature>
<feature type="sequence conflict" description="In Ref. 1; AAA51891." evidence="15" ref="1">
    <original>D</original>
    <variation>G</variation>
    <location>
        <position position="1142"/>
    </location>
</feature>
<feature type="sequence conflict" description="In Ref. 1; AAA51891." evidence="15" ref="1">
    <original>M</original>
    <variation>W</variation>
    <location>
        <position position="1218"/>
    </location>
</feature>
<feature type="sequence conflict" description="In Ref. 1; AAA51891." evidence="15" ref="1">
    <original>A</original>
    <variation>T</variation>
    <location>
        <position position="1758"/>
    </location>
</feature>
<feature type="sequence conflict" description="In Ref. 1; AAA51891." evidence="15" ref="1">
    <original>N</original>
    <variation>S</variation>
    <location>
        <position position="1786"/>
    </location>
</feature>